<protein>
    <recommendedName>
        <fullName>Prolargin</fullName>
    </recommendedName>
    <alternativeName>
        <fullName>Proline-arginine-rich end leucine-rich repeat protein</fullName>
    </alternativeName>
</protein>
<gene>
    <name type="primary">PRELP</name>
    <name type="synonym">SLRR2A</name>
</gene>
<proteinExistence type="evidence at protein level"/>
<sequence>MRSPLCWLLPLLILASVAQGQPTRRPRPGTGPGRRPRPRPRPTPSFPQPDEPAEPTDLPPPLPPGPPSIFPDCPRECYCPPDFPSALYCDSRNLRKVPVIPPRIHYLYLQNNFITELPVESFQNATGLRWINLDNNRIRKIDQRVLEKLPGLVFLYMEKNQLEEVPSALPRNLEQLRLSQNHISRIPPGVFSKLENLLLLDLQHNRLSDGVFKPDTFHGLKNLMQLNLAHNILRKMPPRVPTAIHQLYLDSNKIETIPNGYFKSFPNLAFIRLNYNKLTDRGLPKNSFNISNLLVLHLSHNRISSVPAINNRLEHLYLNNNSIEKINGTQICPNDLVAFHDFSSDLENVPHLRYLRLDGNYLKPPIPLDLMMCFRLLQSVVI</sequence>
<feature type="signal peptide" evidence="3">
    <location>
        <begin position="1"/>
        <end position="20"/>
    </location>
</feature>
<feature type="chain" id="PRO_0000032744" description="Prolargin">
    <location>
        <begin position="21"/>
        <end position="382"/>
    </location>
</feature>
<feature type="repeat" description="LRR 1">
    <location>
        <begin position="95"/>
        <end position="114"/>
    </location>
</feature>
<feature type="repeat" description="LRR 2">
    <location>
        <begin position="115"/>
        <end position="138"/>
    </location>
</feature>
<feature type="repeat" description="LRR 3">
    <location>
        <begin position="139"/>
        <end position="162"/>
    </location>
</feature>
<feature type="repeat" description="LRR 4">
    <location>
        <begin position="163"/>
        <end position="183"/>
    </location>
</feature>
<feature type="repeat" description="LRR 5">
    <location>
        <begin position="184"/>
        <end position="207"/>
    </location>
</feature>
<feature type="repeat" description="LRR 6">
    <location>
        <begin position="208"/>
        <end position="233"/>
    </location>
</feature>
<feature type="repeat" description="LRR 7">
    <location>
        <begin position="234"/>
        <end position="254"/>
    </location>
</feature>
<feature type="repeat" description="LRR 8">
    <location>
        <begin position="255"/>
        <end position="278"/>
    </location>
</feature>
<feature type="repeat" description="LRR 9">
    <location>
        <begin position="279"/>
        <end position="303"/>
    </location>
</feature>
<feature type="repeat" description="LRR 10">
    <location>
        <begin position="304"/>
        <end position="323"/>
    </location>
</feature>
<feature type="repeat" description="LRR 11">
    <location>
        <begin position="324"/>
        <end position="362"/>
    </location>
</feature>
<feature type="repeat" description="LRR 12">
    <location>
        <begin position="363"/>
        <end position="382"/>
    </location>
</feature>
<feature type="region of interest" description="Disordered" evidence="4">
    <location>
        <begin position="19"/>
        <end position="66"/>
    </location>
</feature>
<feature type="compositionally biased region" description="Pro residues" evidence="4">
    <location>
        <begin position="41"/>
        <end position="50"/>
    </location>
</feature>
<feature type="compositionally biased region" description="Pro residues" evidence="4">
    <location>
        <begin position="57"/>
        <end position="66"/>
    </location>
</feature>
<feature type="glycosylation site" description="N-linked (GlcNAc...) asparagine" evidence="6">
    <location>
        <position position="124"/>
    </location>
</feature>
<feature type="glycosylation site" description="N-linked (GlcNAc...) asparagine" evidence="3">
    <location>
        <position position="289"/>
    </location>
</feature>
<feature type="glycosylation site" description="N-linked (GlcNAc...) asparagine" evidence="3">
    <location>
        <position position="320"/>
    </location>
</feature>
<feature type="glycosylation site" description="N-linked (GlcNAc...) asparagine" evidence="6">
    <location>
        <position position="327"/>
    </location>
</feature>
<feature type="disulfide bond" evidence="1">
    <location>
        <begin position="332"/>
        <end position="373"/>
    </location>
</feature>
<feature type="sequence variant" id="VAR_061804" description="In dbSNP:rs41313926.">
    <original>G</original>
    <variation>R</variation>
    <location>
        <position position="33"/>
    </location>
</feature>
<feature type="sequence variant" id="VAR_052012" description="In dbSNP:rs2233726.">
    <original>M</original>
    <variation>V</variation>
    <location>
        <position position="157"/>
    </location>
</feature>
<feature type="sequence variant" id="VAR_052013" description="In dbSNP:rs2233732.">
    <original>N</original>
    <variation>S</variation>
    <location>
        <position position="334"/>
    </location>
</feature>
<feature type="sequence variant" id="VAR_011976" description="In dbSNP:rs9439.">
    <original>N</original>
    <variation>H</variation>
    <location>
        <position position="348"/>
    </location>
</feature>
<keyword id="KW-0903">Direct protein sequencing</keyword>
<keyword id="KW-1015">Disulfide bond</keyword>
<keyword id="KW-0272">Extracellular matrix</keyword>
<keyword id="KW-0325">Glycoprotein</keyword>
<keyword id="KW-0357">Heparan sulfate</keyword>
<keyword id="KW-0358">Heparin-binding</keyword>
<keyword id="KW-0433">Leucine-rich repeat</keyword>
<keyword id="KW-0654">Proteoglycan</keyword>
<keyword id="KW-1267">Proteomics identification</keyword>
<keyword id="KW-1185">Reference proteome</keyword>
<keyword id="KW-0677">Repeat</keyword>
<keyword id="KW-0964">Secreted</keyword>
<keyword id="KW-0732">Signal</keyword>
<organism>
    <name type="scientific">Homo sapiens</name>
    <name type="common">Human</name>
    <dbReference type="NCBI Taxonomy" id="9606"/>
    <lineage>
        <taxon>Eukaryota</taxon>
        <taxon>Metazoa</taxon>
        <taxon>Chordata</taxon>
        <taxon>Craniata</taxon>
        <taxon>Vertebrata</taxon>
        <taxon>Euteleostomi</taxon>
        <taxon>Mammalia</taxon>
        <taxon>Eutheria</taxon>
        <taxon>Euarchontoglires</taxon>
        <taxon>Primates</taxon>
        <taxon>Haplorrhini</taxon>
        <taxon>Catarrhini</taxon>
        <taxon>Hominidae</taxon>
        <taxon>Homo</taxon>
    </lineage>
</organism>
<accession>P51888</accession>
<accession>Q6FG38</accession>
<evidence type="ECO:0000250" key="1"/>
<evidence type="ECO:0000250" key="2">
    <source>
        <dbReference type="UniProtKB" id="Q9GKN8"/>
    </source>
</evidence>
<evidence type="ECO:0000255" key="3"/>
<evidence type="ECO:0000256" key="4">
    <source>
        <dbReference type="SAM" id="MobiDB-lite"/>
    </source>
</evidence>
<evidence type="ECO:0000269" key="5">
    <source>
    </source>
</evidence>
<evidence type="ECO:0000269" key="6">
    <source>
    </source>
</evidence>
<evidence type="ECO:0000305" key="7"/>
<comment type="function">
    <text evidence="2">May anchor basement membranes to the underlying connective tissue.</text>
</comment>
<comment type="subunit">
    <text evidence="2">Binds the basement membrane heparan sulfate proteoglycan perlecan and triple helical collagens type I and type II.</text>
</comment>
<comment type="subcellular location">
    <subcellularLocation>
        <location>Secreted</location>
        <location>Extracellular space</location>
        <location>Extracellular matrix</location>
    </subcellularLocation>
</comment>
<comment type="tissue specificity">
    <text>Connective tissue.</text>
</comment>
<comment type="domain">
    <text evidence="2 5">The basic N-terminal Arg/Pro-rich region binds heparin and heparan sulfate (PubMed:11007795). Binds collagens type I and type II through its leucine-rich repeat domain (By similarity).</text>
</comment>
<comment type="PTM">
    <text evidence="2">Glycosylated; contains heparan sulfate.</text>
</comment>
<comment type="similarity">
    <text evidence="7">Belongs to the small leucine-rich proteoglycan (SLRP) family. SLRP class II subfamily.</text>
</comment>
<reference key="1">
    <citation type="journal article" date="1995" name="J. Biol. Chem.">
        <title>The primary structure of a basic leucine-rich repeat protein, PRELP, found in connective tissues.</title>
        <authorList>
            <person name="Bengtsson E."/>
            <person name="Neame P.J."/>
            <person name="Heinegaard D."/>
            <person name="Sommarin Y."/>
        </authorList>
    </citation>
    <scope>NUCLEOTIDE SEQUENCE [MRNA]</scope>
    <scope>PARTIAL PROTEIN SEQUENCE</scope>
</reference>
<reference key="2">
    <citation type="journal article" date="1996" name="Genomics">
        <title>The gene organization, chromosome location, and expression of a 55-kDa matrix protein (PRELP) of human articular cartilage.</title>
        <authorList>
            <person name="Grover J."/>
            <person name="Chen X.-N."/>
            <person name="Korenberg J.R."/>
            <person name="Recklies A.D."/>
            <person name="Roughley P.J."/>
        </authorList>
    </citation>
    <scope>NUCLEOTIDE SEQUENCE [GENOMIC DNA]</scope>
</reference>
<reference key="3">
    <citation type="submission" date="2004-06" db="EMBL/GenBank/DDBJ databases">
        <title>Cloning of human full open reading frames in Gateway(TM) system entry vector (pDONR201).</title>
        <authorList>
            <person name="Ebert L."/>
            <person name="Schick M."/>
            <person name="Neubert P."/>
            <person name="Schatten R."/>
            <person name="Henze S."/>
            <person name="Korn B."/>
        </authorList>
    </citation>
    <scope>NUCLEOTIDE SEQUENCE [LARGE SCALE MRNA]</scope>
</reference>
<reference key="4">
    <citation type="journal article" date="2006" name="Nature">
        <title>The DNA sequence and biological annotation of human chromosome 1.</title>
        <authorList>
            <person name="Gregory S.G."/>
            <person name="Barlow K.F."/>
            <person name="McLay K.E."/>
            <person name="Kaul R."/>
            <person name="Swarbreck D."/>
            <person name="Dunham A."/>
            <person name="Scott C.E."/>
            <person name="Howe K.L."/>
            <person name="Woodfine K."/>
            <person name="Spencer C.C.A."/>
            <person name="Jones M.C."/>
            <person name="Gillson C."/>
            <person name="Searle S."/>
            <person name="Zhou Y."/>
            <person name="Kokocinski F."/>
            <person name="McDonald L."/>
            <person name="Evans R."/>
            <person name="Phillips K."/>
            <person name="Atkinson A."/>
            <person name="Cooper R."/>
            <person name="Jones C."/>
            <person name="Hall R.E."/>
            <person name="Andrews T.D."/>
            <person name="Lloyd C."/>
            <person name="Ainscough R."/>
            <person name="Almeida J.P."/>
            <person name="Ambrose K.D."/>
            <person name="Anderson F."/>
            <person name="Andrew R.W."/>
            <person name="Ashwell R.I.S."/>
            <person name="Aubin K."/>
            <person name="Babbage A.K."/>
            <person name="Bagguley C.L."/>
            <person name="Bailey J."/>
            <person name="Beasley H."/>
            <person name="Bethel G."/>
            <person name="Bird C.P."/>
            <person name="Bray-Allen S."/>
            <person name="Brown J.Y."/>
            <person name="Brown A.J."/>
            <person name="Buckley D."/>
            <person name="Burton J."/>
            <person name="Bye J."/>
            <person name="Carder C."/>
            <person name="Chapman J.C."/>
            <person name="Clark S.Y."/>
            <person name="Clarke G."/>
            <person name="Clee C."/>
            <person name="Cobley V."/>
            <person name="Collier R.E."/>
            <person name="Corby N."/>
            <person name="Coville G.J."/>
            <person name="Davies J."/>
            <person name="Deadman R."/>
            <person name="Dunn M."/>
            <person name="Earthrowl M."/>
            <person name="Ellington A.G."/>
            <person name="Errington H."/>
            <person name="Frankish A."/>
            <person name="Frankland J."/>
            <person name="French L."/>
            <person name="Garner P."/>
            <person name="Garnett J."/>
            <person name="Gay L."/>
            <person name="Ghori M.R.J."/>
            <person name="Gibson R."/>
            <person name="Gilby L.M."/>
            <person name="Gillett W."/>
            <person name="Glithero R.J."/>
            <person name="Grafham D.V."/>
            <person name="Griffiths C."/>
            <person name="Griffiths-Jones S."/>
            <person name="Grocock R."/>
            <person name="Hammond S."/>
            <person name="Harrison E.S.I."/>
            <person name="Hart E."/>
            <person name="Haugen E."/>
            <person name="Heath P.D."/>
            <person name="Holmes S."/>
            <person name="Holt K."/>
            <person name="Howden P.J."/>
            <person name="Hunt A.R."/>
            <person name="Hunt S.E."/>
            <person name="Hunter G."/>
            <person name="Isherwood J."/>
            <person name="James R."/>
            <person name="Johnson C."/>
            <person name="Johnson D."/>
            <person name="Joy A."/>
            <person name="Kay M."/>
            <person name="Kershaw J.K."/>
            <person name="Kibukawa M."/>
            <person name="Kimberley A.M."/>
            <person name="King A."/>
            <person name="Knights A.J."/>
            <person name="Lad H."/>
            <person name="Laird G."/>
            <person name="Lawlor S."/>
            <person name="Leongamornlert D.A."/>
            <person name="Lloyd D.M."/>
            <person name="Loveland J."/>
            <person name="Lovell J."/>
            <person name="Lush M.J."/>
            <person name="Lyne R."/>
            <person name="Martin S."/>
            <person name="Mashreghi-Mohammadi M."/>
            <person name="Matthews L."/>
            <person name="Matthews N.S.W."/>
            <person name="McLaren S."/>
            <person name="Milne S."/>
            <person name="Mistry S."/>
            <person name="Moore M.J.F."/>
            <person name="Nickerson T."/>
            <person name="O'Dell C.N."/>
            <person name="Oliver K."/>
            <person name="Palmeiri A."/>
            <person name="Palmer S.A."/>
            <person name="Parker A."/>
            <person name="Patel D."/>
            <person name="Pearce A.V."/>
            <person name="Peck A.I."/>
            <person name="Pelan S."/>
            <person name="Phelps K."/>
            <person name="Phillimore B.J."/>
            <person name="Plumb R."/>
            <person name="Rajan J."/>
            <person name="Raymond C."/>
            <person name="Rouse G."/>
            <person name="Saenphimmachak C."/>
            <person name="Sehra H.K."/>
            <person name="Sheridan E."/>
            <person name="Shownkeen R."/>
            <person name="Sims S."/>
            <person name="Skuce C.D."/>
            <person name="Smith M."/>
            <person name="Steward C."/>
            <person name="Subramanian S."/>
            <person name="Sycamore N."/>
            <person name="Tracey A."/>
            <person name="Tromans A."/>
            <person name="Van Helmond Z."/>
            <person name="Wall M."/>
            <person name="Wallis J.M."/>
            <person name="White S."/>
            <person name="Whitehead S.L."/>
            <person name="Wilkinson J.E."/>
            <person name="Willey D.L."/>
            <person name="Williams H."/>
            <person name="Wilming L."/>
            <person name="Wray P.W."/>
            <person name="Wu Z."/>
            <person name="Coulson A."/>
            <person name="Vaudin M."/>
            <person name="Sulston J.E."/>
            <person name="Durbin R.M."/>
            <person name="Hubbard T."/>
            <person name="Wooster R."/>
            <person name="Dunham I."/>
            <person name="Carter N.P."/>
            <person name="McVean G."/>
            <person name="Ross M.T."/>
            <person name="Harrow J."/>
            <person name="Olson M.V."/>
            <person name="Beck S."/>
            <person name="Rogers J."/>
            <person name="Bentley D.R."/>
        </authorList>
    </citation>
    <scope>NUCLEOTIDE SEQUENCE [LARGE SCALE GENOMIC DNA]</scope>
</reference>
<reference key="5">
    <citation type="submission" date="2005-07" db="EMBL/GenBank/DDBJ databases">
        <authorList>
            <person name="Mural R.J."/>
            <person name="Istrail S."/>
            <person name="Sutton G."/>
            <person name="Florea L."/>
            <person name="Halpern A.L."/>
            <person name="Mobarry C.M."/>
            <person name="Lippert R."/>
            <person name="Walenz B."/>
            <person name="Shatkay H."/>
            <person name="Dew I."/>
            <person name="Miller J.R."/>
            <person name="Flanigan M.J."/>
            <person name="Edwards N.J."/>
            <person name="Bolanos R."/>
            <person name="Fasulo D."/>
            <person name="Halldorsson B.V."/>
            <person name="Hannenhalli S."/>
            <person name="Turner R."/>
            <person name="Yooseph S."/>
            <person name="Lu F."/>
            <person name="Nusskern D.R."/>
            <person name="Shue B.C."/>
            <person name="Zheng X.H."/>
            <person name="Zhong F."/>
            <person name="Delcher A.L."/>
            <person name="Huson D.H."/>
            <person name="Kravitz S.A."/>
            <person name="Mouchard L."/>
            <person name="Reinert K."/>
            <person name="Remington K.A."/>
            <person name="Clark A.G."/>
            <person name="Waterman M.S."/>
            <person name="Eichler E.E."/>
            <person name="Adams M.D."/>
            <person name="Hunkapiller M.W."/>
            <person name="Myers E.W."/>
            <person name="Venter J.C."/>
        </authorList>
    </citation>
    <scope>NUCLEOTIDE SEQUENCE [LARGE SCALE GENOMIC DNA]</scope>
</reference>
<reference key="6">
    <citation type="journal article" date="2004" name="Genome Res.">
        <title>The status, quality, and expansion of the NIH full-length cDNA project: the Mammalian Gene Collection (MGC).</title>
        <authorList>
            <consortium name="The MGC Project Team"/>
        </authorList>
    </citation>
    <scope>NUCLEOTIDE SEQUENCE [LARGE SCALE MRNA]</scope>
    <source>
        <tissue>Pancreas</tissue>
        <tissue>Spleen</tissue>
    </source>
</reference>
<reference key="7">
    <citation type="journal article" date="2000" name="J. Biol. Chem.">
        <title>The amino-terminal part of PRELP binds to heparin and heparan sulfate.</title>
        <authorList>
            <person name="Bengtsson E."/>
            <person name="Aspberg A."/>
            <person name="Heinegaard D."/>
            <person name="Sommarin Y."/>
            <person name="Spillmann D."/>
        </authorList>
    </citation>
    <scope>DOMAIN</scope>
</reference>
<reference key="8">
    <citation type="journal article" date="2009" name="J. Proteome Res.">
        <title>Glycoproteomics analysis of human liver tissue by combination of multiple enzyme digestion and hydrazide chemistry.</title>
        <authorList>
            <person name="Chen R."/>
            <person name="Jiang X."/>
            <person name="Sun D."/>
            <person name="Han G."/>
            <person name="Wang F."/>
            <person name="Ye M."/>
            <person name="Wang L."/>
            <person name="Zou H."/>
        </authorList>
    </citation>
    <scope>GLYCOSYLATION [LARGE SCALE ANALYSIS] AT ASN-124 AND ASN-327</scope>
    <source>
        <tissue>Liver</tissue>
    </source>
</reference>
<name>PRELP_HUMAN</name>
<dbReference type="EMBL" id="U29089">
    <property type="protein sequence ID" value="AAC50230.1"/>
    <property type="molecule type" value="mRNA"/>
</dbReference>
<dbReference type="EMBL" id="U41344">
    <property type="protein sequence ID" value="AAC18782.1"/>
    <property type="molecule type" value="Genomic_DNA"/>
</dbReference>
<dbReference type="EMBL" id="U41343">
    <property type="protein sequence ID" value="AAC18782.1"/>
    <property type="status" value="JOINED"/>
    <property type="molecule type" value="Genomic_DNA"/>
</dbReference>
<dbReference type="EMBL" id="CR542270">
    <property type="protein sequence ID" value="CAG47066.1"/>
    <property type="molecule type" value="mRNA"/>
</dbReference>
<dbReference type="EMBL" id="AL391817">
    <property type="status" value="NOT_ANNOTATED_CDS"/>
    <property type="molecule type" value="Genomic_DNA"/>
</dbReference>
<dbReference type="EMBL" id="CH471067">
    <property type="protein sequence ID" value="EAW91481.1"/>
    <property type="molecule type" value="Genomic_DNA"/>
</dbReference>
<dbReference type="EMBL" id="BC032498">
    <property type="protein sequence ID" value="AAH32498.1"/>
    <property type="molecule type" value="mRNA"/>
</dbReference>
<dbReference type="CCDS" id="CCDS1438.1"/>
<dbReference type="PIR" id="I39068">
    <property type="entry name" value="I39068"/>
</dbReference>
<dbReference type="RefSeq" id="NP_002716.1">
    <property type="nucleotide sequence ID" value="NM_002725.4"/>
</dbReference>
<dbReference type="RefSeq" id="NP_958505.1">
    <property type="nucleotide sequence ID" value="NM_201348.2"/>
</dbReference>
<dbReference type="SMR" id="P51888"/>
<dbReference type="BioGRID" id="111540">
    <property type="interactions" value="38"/>
</dbReference>
<dbReference type="FunCoup" id="P51888">
    <property type="interactions" value="159"/>
</dbReference>
<dbReference type="IntAct" id="P51888">
    <property type="interactions" value="26"/>
</dbReference>
<dbReference type="MINT" id="P51888"/>
<dbReference type="STRING" id="9606.ENSP00000343924"/>
<dbReference type="GlyConnect" id="1637">
    <property type="glycosylation" value="35 N-Linked glycans (3 sites)"/>
</dbReference>
<dbReference type="GlyCosmos" id="P51888">
    <property type="glycosylation" value="7 sites, 38 glycans"/>
</dbReference>
<dbReference type="GlyGen" id="P51888">
    <property type="glycosylation" value="7 sites, 169 N-linked glycans (4 sites), 4 O-linked glycans (3 sites)"/>
</dbReference>
<dbReference type="iPTMnet" id="P51888"/>
<dbReference type="PhosphoSitePlus" id="P51888"/>
<dbReference type="BioMuta" id="PRELP"/>
<dbReference type="DMDM" id="1709586"/>
<dbReference type="jPOST" id="P51888"/>
<dbReference type="MassIVE" id="P51888"/>
<dbReference type="PaxDb" id="9606-ENSP00000343924"/>
<dbReference type="PeptideAtlas" id="P51888"/>
<dbReference type="ProteomicsDB" id="56449"/>
<dbReference type="TopDownProteomics" id="P51888"/>
<dbReference type="Antibodypedia" id="34545">
    <property type="antibodies" value="151 antibodies from 24 providers"/>
</dbReference>
<dbReference type="DNASU" id="5549"/>
<dbReference type="Ensembl" id="ENST00000343110.3">
    <property type="protein sequence ID" value="ENSP00000343924.2"/>
    <property type="gene ID" value="ENSG00000188783.6"/>
</dbReference>
<dbReference type="GeneID" id="5549"/>
<dbReference type="KEGG" id="hsa:5549"/>
<dbReference type="MANE-Select" id="ENST00000343110.3">
    <property type="protein sequence ID" value="ENSP00000343924.2"/>
    <property type="RefSeq nucleotide sequence ID" value="NM_002725.4"/>
    <property type="RefSeq protein sequence ID" value="NP_002716.1"/>
</dbReference>
<dbReference type="UCSC" id="uc001gzs.4">
    <property type="organism name" value="human"/>
</dbReference>
<dbReference type="AGR" id="HGNC:9357"/>
<dbReference type="CTD" id="5549"/>
<dbReference type="DisGeNET" id="5549"/>
<dbReference type="GeneCards" id="PRELP"/>
<dbReference type="HGNC" id="HGNC:9357">
    <property type="gene designation" value="PRELP"/>
</dbReference>
<dbReference type="HPA" id="ENSG00000188783">
    <property type="expression patterns" value="Low tissue specificity"/>
</dbReference>
<dbReference type="MIM" id="601914">
    <property type="type" value="gene"/>
</dbReference>
<dbReference type="neXtProt" id="NX_P51888"/>
<dbReference type="OpenTargets" id="ENSG00000188783"/>
<dbReference type="PharmGKB" id="PA33729"/>
<dbReference type="VEuPathDB" id="HostDB:ENSG00000188783"/>
<dbReference type="eggNOG" id="KOG0619">
    <property type="taxonomic scope" value="Eukaryota"/>
</dbReference>
<dbReference type="GeneTree" id="ENSGT00940000160163"/>
<dbReference type="HOGENOM" id="CLU_000288_186_4_1"/>
<dbReference type="InParanoid" id="P51888"/>
<dbReference type="OMA" id="ELRWVNL"/>
<dbReference type="OrthoDB" id="5789657at2759"/>
<dbReference type="PAN-GO" id="P51888">
    <property type="GO annotations" value="2 GO annotations based on evolutionary models"/>
</dbReference>
<dbReference type="PhylomeDB" id="P51888"/>
<dbReference type="TreeFam" id="TF334562"/>
<dbReference type="PathwayCommons" id="P51888"/>
<dbReference type="Reactome" id="R-HSA-2022854">
    <property type="pathway name" value="Keratan sulfate biosynthesis"/>
</dbReference>
<dbReference type="Reactome" id="R-HSA-2022857">
    <property type="pathway name" value="Keratan sulfate degradation"/>
</dbReference>
<dbReference type="Reactome" id="R-HSA-3656225">
    <property type="pathway name" value="Defective CHST6 causes MCDC1"/>
</dbReference>
<dbReference type="Reactome" id="R-HSA-3656243">
    <property type="pathway name" value="Defective ST3GAL3 causes MCT12 and EIEE15"/>
</dbReference>
<dbReference type="Reactome" id="R-HSA-3656244">
    <property type="pathway name" value="Defective B4GALT1 causes B4GALT1-CDG (CDG-2d)"/>
</dbReference>
<dbReference type="SignaLink" id="P51888"/>
<dbReference type="BioGRID-ORCS" id="5549">
    <property type="hits" value="4 hits in 1157 CRISPR screens"/>
</dbReference>
<dbReference type="ChiTaRS" id="PRELP">
    <property type="organism name" value="human"/>
</dbReference>
<dbReference type="GeneWiki" id="PRELP"/>
<dbReference type="GenomeRNAi" id="5549"/>
<dbReference type="Pharos" id="P51888">
    <property type="development level" value="Tbio"/>
</dbReference>
<dbReference type="PRO" id="PR:P51888"/>
<dbReference type="Proteomes" id="UP000005640">
    <property type="component" value="Chromosome 1"/>
</dbReference>
<dbReference type="RNAct" id="P51888">
    <property type="molecule type" value="protein"/>
</dbReference>
<dbReference type="Bgee" id="ENSG00000188783">
    <property type="expression patterns" value="Expressed in saphenous vein and 172 other cell types or tissues"/>
</dbReference>
<dbReference type="GO" id="GO:0062023">
    <property type="term" value="C:collagen-containing extracellular matrix"/>
    <property type="evidence" value="ECO:0007005"/>
    <property type="project" value="BHF-UCL"/>
</dbReference>
<dbReference type="GO" id="GO:0070062">
    <property type="term" value="C:extracellular exosome"/>
    <property type="evidence" value="ECO:0007005"/>
    <property type="project" value="UniProtKB"/>
</dbReference>
<dbReference type="GO" id="GO:0031012">
    <property type="term" value="C:extracellular matrix"/>
    <property type="evidence" value="ECO:0000304"/>
    <property type="project" value="ProtInc"/>
</dbReference>
<dbReference type="GO" id="GO:0005576">
    <property type="term" value="C:extracellular region"/>
    <property type="evidence" value="ECO:0007005"/>
    <property type="project" value="BHF-UCL"/>
</dbReference>
<dbReference type="GO" id="GO:0005615">
    <property type="term" value="C:extracellular space"/>
    <property type="evidence" value="ECO:0000318"/>
    <property type="project" value="GO_Central"/>
</dbReference>
<dbReference type="GO" id="GO:1903561">
    <property type="term" value="C:extracellular vesicle"/>
    <property type="evidence" value="ECO:0007005"/>
    <property type="project" value="UniProtKB"/>
</dbReference>
<dbReference type="GO" id="GO:0005796">
    <property type="term" value="C:Golgi lumen"/>
    <property type="evidence" value="ECO:0000304"/>
    <property type="project" value="Reactome"/>
</dbReference>
<dbReference type="GO" id="GO:0043202">
    <property type="term" value="C:lysosomal lumen"/>
    <property type="evidence" value="ECO:0000304"/>
    <property type="project" value="Reactome"/>
</dbReference>
<dbReference type="GO" id="GO:0005201">
    <property type="term" value="F:extracellular matrix structural constituent"/>
    <property type="evidence" value="ECO:0000304"/>
    <property type="project" value="ProtInc"/>
</dbReference>
<dbReference type="GO" id="GO:0030021">
    <property type="term" value="F:extracellular matrix structural constituent conferring compression resistance"/>
    <property type="evidence" value="ECO:0000250"/>
    <property type="project" value="BHF-UCL"/>
</dbReference>
<dbReference type="GO" id="GO:0008201">
    <property type="term" value="F:heparin binding"/>
    <property type="evidence" value="ECO:0000318"/>
    <property type="project" value="GO_Central"/>
</dbReference>
<dbReference type="GO" id="GO:0090398">
    <property type="term" value="P:cellular senescence"/>
    <property type="evidence" value="ECO:0007669"/>
    <property type="project" value="Ensembl"/>
</dbReference>
<dbReference type="GO" id="GO:0001501">
    <property type="term" value="P:skeletal system development"/>
    <property type="evidence" value="ECO:0000304"/>
    <property type="project" value="ProtInc"/>
</dbReference>
<dbReference type="FunFam" id="3.80.10.10:FF:000092">
    <property type="entry name" value="keratocan isoform X1"/>
    <property type="match status" value="1"/>
</dbReference>
<dbReference type="FunFam" id="3.80.10.10:FF:000133">
    <property type="entry name" value="prolargin"/>
    <property type="match status" value="1"/>
</dbReference>
<dbReference type="Gene3D" id="3.80.10.10">
    <property type="entry name" value="Ribonuclease Inhibitor"/>
    <property type="match status" value="3"/>
</dbReference>
<dbReference type="InterPro" id="IPR001611">
    <property type="entry name" value="Leu-rich_rpt"/>
</dbReference>
<dbReference type="InterPro" id="IPR003591">
    <property type="entry name" value="Leu-rich_rpt_typical-subtyp"/>
</dbReference>
<dbReference type="InterPro" id="IPR032675">
    <property type="entry name" value="LRR_dom_sf"/>
</dbReference>
<dbReference type="InterPro" id="IPR000372">
    <property type="entry name" value="LRRNT"/>
</dbReference>
<dbReference type="InterPro" id="IPR050333">
    <property type="entry name" value="SLRP"/>
</dbReference>
<dbReference type="PANTHER" id="PTHR45712">
    <property type="entry name" value="AGAP008170-PA"/>
    <property type="match status" value="1"/>
</dbReference>
<dbReference type="PANTHER" id="PTHR45712:SF8">
    <property type="entry name" value="PROLARGIN"/>
    <property type="match status" value="1"/>
</dbReference>
<dbReference type="Pfam" id="PF13855">
    <property type="entry name" value="LRR_8"/>
    <property type="match status" value="3"/>
</dbReference>
<dbReference type="SMART" id="SM00364">
    <property type="entry name" value="LRR_BAC"/>
    <property type="match status" value="4"/>
</dbReference>
<dbReference type="SMART" id="SM00369">
    <property type="entry name" value="LRR_TYP"/>
    <property type="match status" value="8"/>
</dbReference>
<dbReference type="SMART" id="SM00013">
    <property type="entry name" value="LRRNT"/>
    <property type="match status" value="1"/>
</dbReference>
<dbReference type="SUPFAM" id="SSF52058">
    <property type="entry name" value="L domain-like"/>
    <property type="match status" value="1"/>
</dbReference>
<dbReference type="PROSITE" id="PS51450">
    <property type="entry name" value="LRR"/>
    <property type="match status" value="11"/>
</dbReference>